<feature type="chain" id="PRO_0000245236" description="AN1-type zinc finger protein 6">
    <location>
        <begin position="1"/>
        <end position="223"/>
    </location>
</feature>
<feature type="zinc finger region" description="A20-type" evidence="4">
    <location>
        <begin position="8"/>
        <end position="42"/>
    </location>
</feature>
<feature type="zinc finger region" description="AN1-type" evidence="3">
    <location>
        <begin position="158"/>
        <end position="204"/>
    </location>
</feature>
<feature type="region of interest" description="Disordered" evidence="5">
    <location>
        <begin position="41"/>
        <end position="155"/>
    </location>
</feature>
<feature type="compositionally biased region" description="Polar residues" evidence="5">
    <location>
        <begin position="77"/>
        <end position="110"/>
    </location>
</feature>
<feature type="compositionally biased region" description="Polar residues" evidence="5">
    <location>
        <begin position="137"/>
        <end position="148"/>
    </location>
</feature>
<feature type="binding site" evidence="4">
    <location>
        <position position="14"/>
    </location>
    <ligand>
        <name>Zn(2+)</name>
        <dbReference type="ChEBI" id="CHEBI:29105"/>
        <label>1</label>
    </ligand>
</feature>
<feature type="binding site" evidence="4">
    <location>
        <position position="18"/>
    </location>
    <ligand>
        <name>Zn(2+)</name>
        <dbReference type="ChEBI" id="CHEBI:29105"/>
        <label>1</label>
    </ligand>
</feature>
<feature type="binding site" evidence="4">
    <location>
        <position position="30"/>
    </location>
    <ligand>
        <name>Zn(2+)</name>
        <dbReference type="ChEBI" id="CHEBI:29105"/>
        <label>1</label>
    </ligand>
</feature>
<feature type="binding site" evidence="4">
    <location>
        <position position="33"/>
    </location>
    <ligand>
        <name>Zn(2+)</name>
        <dbReference type="ChEBI" id="CHEBI:29105"/>
        <label>1</label>
    </ligand>
</feature>
<feature type="binding site" evidence="3">
    <location>
        <position position="164"/>
    </location>
    <ligand>
        <name>Zn(2+)</name>
        <dbReference type="ChEBI" id="CHEBI:29105"/>
        <label>2</label>
    </ligand>
</feature>
<feature type="binding site" evidence="3">
    <location>
        <position position="167"/>
    </location>
    <ligand>
        <name>Zn(2+)</name>
        <dbReference type="ChEBI" id="CHEBI:29105"/>
        <label>2</label>
    </ligand>
</feature>
<feature type="binding site" evidence="3">
    <location>
        <position position="178"/>
    </location>
    <ligand>
        <name>Zn(2+)</name>
        <dbReference type="ChEBI" id="CHEBI:29105"/>
        <label>3</label>
    </ligand>
</feature>
<feature type="binding site" evidence="3">
    <location>
        <position position="180"/>
    </location>
    <ligand>
        <name>Zn(2+)</name>
        <dbReference type="ChEBI" id="CHEBI:29105"/>
        <label>3</label>
    </ligand>
</feature>
<feature type="binding site" evidence="3">
    <location>
        <position position="185"/>
    </location>
    <ligand>
        <name>Zn(2+)</name>
        <dbReference type="ChEBI" id="CHEBI:29105"/>
        <label>2</label>
    </ligand>
</feature>
<feature type="binding site" evidence="3">
    <location>
        <position position="188"/>
    </location>
    <ligand>
        <name>Zn(2+)</name>
        <dbReference type="ChEBI" id="CHEBI:29105"/>
        <label>2</label>
    </ligand>
</feature>
<feature type="binding site" evidence="3">
    <location>
        <position position="194"/>
    </location>
    <ligand>
        <name>Zn(2+)</name>
        <dbReference type="ChEBI" id="CHEBI:29105"/>
        <label>3</label>
    </ligand>
</feature>
<feature type="binding site" evidence="3">
    <location>
        <position position="196"/>
    </location>
    <ligand>
        <name>Zn(2+)</name>
        <dbReference type="ChEBI" id="CHEBI:29105"/>
        <label>3</label>
    </ligand>
</feature>
<feature type="modified residue" description="Phosphoserine" evidence="2">
    <location>
        <position position="49"/>
    </location>
</feature>
<feature type="modified residue" description="N6-acetyllysine" evidence="9">
    <location>
        <position position="219"/>
    </location>
</feature>
<feature type="mutagenesis site" description="Abolishes interaction with PEX6 and ubiquitin. Impairs interaction with PEX5." evidence="7">
    <original>C</original>
    <variation>S</variation>
    <location>
        <position position="30"/>
    </location>
</feature>
<feature type="mutagenesis site" description="Impairs interaction with PEX6." evidence="7">
    <original>C</original>
    <variation>S</variation>
    <location>
        <position position="180"/>
    </location>
</feature>
<feature type="sequence conflict" description="In Ref. 1; CAC14886." evidence="8" ref="1">
    <original>S</original>
    <variation>P</variation>
    <location>
        <position position="99"/>
    </location>
</feature>
<feature type="sequence conflict" description="In Ref. 1; CAC14886." evidence="8" ref="1">
    <original>Y</original>
    <variation>S</variation>
    <location>
        <position position="190"/>
    </location>
</feature>
<dbReference type="EMBL" id="AJ251508">
    <property type="protein sequence ID" value="CAC14886.1"/>
    <property type="molecule type" value="mRNA"/>
</dbReference>
<dbReference type="EMBL" id="AK002775">
    <property type="protein sequence ID" value="BAB22349.1"/>
    <property type="molecule type" value="mRNA"/>
</dbReference>
<dbReference type="EMBL" id="AK144902">
    <property type="protein sequence ID" value="BAE26124.1"/>
    <property type="molecule type" value="mRNA"/>
</dbReference>
<dbReference type="EMBL" id="BC010683">
    <property type="protein sequence ID" value="AAH10683.1"/>
    <property type="molecule type" value="mRNA"/>
</dbReference>
<dbReference type="CCDS" id="CCDS21419.1"/>
<dbReference type="RefSeq" id="NP_001347506.1">
    <property type="nucleotide sequence ID" value="NM_001360577.1"/>
</dbReference>
<dbReference type="RefSeq" id="NP_001347507.1">
    <property type="nucleotide sequence ID" value="NM_001360578.1"/>
</dbReference>
<dbReference type="RefSeq" id="NP_001347508.1">
    <property type="nucleotide sequence ID" value="NM_001360579.1"/>
</dbReference>
<dbReference type="RefSeq" id="NP_001347509.1">
    <property type="nucleotide sequence ID" value="NM_001360580.1"/>
</dbReference>
<dbReference type="RefSeq" id="NP_001347510.1">
    <property type="nucleotide sequence ID" value="NM_001360581.1"/>
</dbReference>
<dbReference type="RefSeq" id="NP_075361.2">
    <property type="nucleotide sequence ID" value="NM_022985.6"/>
</dbReference>
<dbReference type="RefSeq" id="XP_006508168.1">
    <property type="nucleotide sequence ID" value="XM_006508105.2"/>
</dbReference>
<dbReference type="RefSeq" id="XP_006508169.1">
    <property type="nucleotide sequence ID" value="XM_006508106.2"/>
</dbReference>
<dbReference type="RefSeq" id="XP_006508170.1">
    <property type="nucleotide sequence ID" value="XM_006508107.3"/>
</dbReference>
<dbReference type="RefSeq" id="XP_006508171.1">
    <property type="nucleotide sequence ID" value="XM_006508108.1"/>
</dbReference>
<dbReference type="RefSeq" id="XP_030098726.1">
    <property type="nucleotide sequence ID" value="XM_030242866.2"/>
</dbReference>
<dbReference type="RefSeq" id="XP_030098727.1">
    <property type="nucleotide sequence ID" value="XM_030242867.2"/>
</dbReference>
<dbReference type="RefSeq" id="XP_030098728.1">
    <property type="nucleotide sequence ID" value="XM_030242868.1"/>
</dbReference>
<dbReference type="RefSeq" id="XP_030098729.1">
    <property type="nucleotide sequence ID" value="XM_030242869.2"/>
</dbReference>
<dbReference type="RefSeq" id="XP_036009223.1">
    <property type="nucleotide sequence ID" value="XM_036153330.1"/>
</dbReference>
<dbReference type="SMR" id="Q9DCH6"/>
<dbReference type="BioGRID" id="211125">
    <property type="interactions" value="5"/>
</dbReference>
<dbReference type="FunCoup" id="Q9DCH6">
    <property type="interactions" value="2827"/>
</dbReference>
<dbReference type="STRING" id="10090.ENSMUSP00000146518"/>
<dbReference type="iPTMnet" id="Q9DCH6"/>
<dbReference type="PhosphoSitePlus" id="Q9DCH6"/>
<dbReference type="SwissPalm" id="Q9DCH6"/>
<dbReference type="PaxDb" id="10090-ENSMUSP00000069228"/>
<dbReference type="PeptideAtlas" id="Q9DCH6"/>
<dbReference type="ProteomicsDB" id="298518"/>
<dbReference type="Pumba" id="Q9DCH6"/>
<dbReference type="Antibodypedia" id="15226">
    <property type="antibodies" value="105 antibodies from 18 providers"/>
</dbReference>
<dbReference type="Ensembl" id="ENSMUST00000069537.3">
    <property type="protein sequence ID" value="ENSMUSP00000069228.3"/>
    <property type="gene ID" value="ENSMUSG00000030629.16"/>
</dbReference>
<dbReference type="Ensembl" id="ENSMUST00000178385.9">
    <property type="protein sequence ID" value="ENSMUSP00000135968.2"/>
    <property type="gene ID" value="ENSMUSG00000030629.16"/>
</dbReference>
<dbReference type="Ensembl" id="ENSMUST00000209117.2">
    <property type="protein sequence ID" value="ENSMUSP00000146518.2"/>
    <property type="gene ID" value="ENSMUSG00000030629.16"/>
</dbReference>
<dbReference type="GeneID" id="65098"/>
<dbReference type="KEGG" id="mmu:65098"/>
<dbReference type="UCSC" id="uc009iek.1">
    <property type="organism name" value="mouse"/>
</dbReference>
<dbReference type="AGR" id="MGI:1929510"/>
<dbReference type="CTD" id="54469"/>
<dbReference type="MGI" id="MGI:1929510">
    <property type="gene designation" value="Zfand6"/>
</dbReference>
<dbReference type="VEuPathDB" id="HostDB:ENSMUSG00000030629"/>
<dbReference type="eggNOG" id="KOG3173">
    <property type="taxonomic scope" value="Eukaryota"/>
</dbReference>
<dbReference type="GeneTree" id="ENSGT00940000160833"/>
<dbReference type="HOGENOM" id="CLU_057016_1_0_1"/>
<dbReference type="InParanoid" id="Q9DCH6"/>
<dbReference type="OMA" id="YCAMHRY"/>
<dbReference type="OrthoDB" id="428577at2759"/>
<dbReference type="PhylomeDB" id="Q9DCH6"/>
<dbReference type="TreeFam" id="TF313612"/>
<dbReference type="Reactome" id="R-MMU-9033241">
    <property type="pathway name" value="Peroxisomal protein import"/>
</dbReference>
<dbReference type="BioGRID-ORCS" id="65098">
    <property type="hits" value="3 hits in 81 CRISPR screens"/>
</dbReference>
<dbReference type="ChiTaRS" id="Zfand6">
    <property type="organism name" value="mouse"/>
</dbReference>
<dbReference type="PRO" id="PR:Q9DCH6"/>
<dbReference type="Proteomes" id="UP000000589">
    <property type="component" value="Chromosome 7"/>
</dbReference>
<dbReference type="RNAct" id="Q9DCH6">
    <property type="molecule type" value="protein"/>
</dbReference>
<dbReference type="Bgee" id="ENSMUSG00000030629">
    <property type="expression patterns" value="Expressed in metanephric cortical collecting duct and 263 other cell types or tissues"/>
</dbReference>
<dbReference type="ExpressionAtlas" id="Q9DCH6">
    <property type="expression patterns" value="baseline and differential"/>
</dbReference>
<dbReference type="GO" id="GO:0005737">
    <property type="term" value="C:cytoplasm"/>
    <property type="evidence" value="ECO:0007669"/>
    <property type="project" value="UniProtKB-SubCell"/>
</dbReference>
<dbReference type="GO" id="GO:0003677">
    <property type="term" value="F:DNA binding"/>
    <property type="evidence" value="ECO:0007669"/>
    <property type="project" value="InterPro"/>
</dbReference>
<dbReference type="GO" id="GO:0031593">
    <property type="term" value="F:polyubiquitin modification-dependent protein binding"/>
    <property type="evidence" value="ECO:0000314"/>
    <property type="project" value="UniProtKB"/>
</dbReference>
<dbReference type="GO" id="GO:0008270">
    <property type="term" value="F:zinc ion binding"/>
    <property type="evidence" value="ECO:0007669"/>
    <property type="project" value="UniProtKB-KW"/>
</dbReference>
<dbReference type="GO" id="GO:0006915">
    <property type="term" value="P:apoptotic process"/>
    <property type="evidence" value="ECO:0007669"/>
    <property type="project" value="UniProtKB-KW"/>
</dbReference>
<dbReference type="GO" id="GO:0071356">
    <property type="term" value="P:cellular response to tumor necrosis factor"/>
    <property type="evidence" value="ECO:0000250"/>
    <property type="project" value="UniProtKB"/>
</dbReference>
<dbReference type="GO" id="GO:0043066">
    <property type="term" value="P:negative regulation of apoptotic process"/>
    <property type="evidence" value="ECO:0000250"/>
    <property type="project" value="UniProtKB"/>
</dbReference>
<dbReference type="GO" id="GO:0006625">
    <property type="term" value="P:protein targeting to peroxisome"/>
    <property type="evidence" value="ECO:0000314"/>
    <property type="project" value="UniProtKB"/>
</dbReference>
<dbReference type="GO" id="GO:0015031">
    <property type="term" value="P:protein transport"/>
    <property type="evidence" value="ECO:0007669"/>
    <property type="project" value="UniProtKB-KW"/>
</dbReference>
<dbReference type="GO" id="GO:0043122">
    <property type="term" value="P:regulation of canonical NF-kappaB signal transduction"/>
    <property type="evidence" value="ECO:0000250"/>
    <property type="project" value="UniProtKB"/>
</dbReference>
<dbReference type="FunFam" id="1.20.5.4770:FF:000001">
    <property type="entry name" value="Zinc finger AN1-type containing 6"/>
    <property type="match status" value="1"/>
</dbReference>
<dbReference type="FunFam" id="4.10.1110.10:FF:000001">
    <property type="entry name" value="Zinc finger AN1-type containing 6"/>
    <property type="match status" value="1"/>
</dbReference>
<dbReference type="Gene3D" id="1.20.5.4770">
    <property type="match status" value="1"/>
</dbReference>
<dbReference type="Gene3D" id="4.10.1110.10">
    <property type="entry name" value="AN1-like Zinc finger"/>
    <property type="match status" value="1"/>
</dbReference>
<dbReference type="InterPro" id="IPR035896">
    <property type="entry name" value="AN1-like_Znf"/>
</dbReference>
<dbReference type="InterPro" id="IPR050652">
    <property type="entry name" value="AN1_A20_ZnFinger"/>
</dbReference>
<dbReference type="InterPro" id="IPR002653">
    <property type="entry name" value="Znf_A20"/>
</dbReference>
<dbReference type="InterPro" id="IPR000058">
    <property type="entry name" value="Znf_AN1"/>
</dbReference>
<dbReference type="PANTHER" id="PTHR10634">
    <property type="entry name" value="AN1-TYPE ZINC FINGER PROTEIN"/>
    <property type="match status" value="1"/>
</dbReference>
<dbReference type="PANTHER" id="PTHR10634:SF25">
    <property type="entry name" value="AN1-TYPE ZINC FINGER PROTEIN 6"/>
    <property type="match status" value="1"/>
</dbReference>
<dbReference type="Pfam" id="PF01754">
    <property type="entry name" value="zf-A20"/>
    <property type="match status" value="1"/>
</dbReference>
<dbReference type="Pfam" id="PF01428">
    <property type="entry name" value="zf-AN1"/>
    <property type="match status" value="1"/>
</dbReference>
<dbReference type="SMART" id="SM00259">
    <property type="entry name" value="ZnF_A20"/>
    <property type="match status" value="1"/>
</dbReference>
<dbReference type="SMART" id="SM00154">
    <property type="entry name" value="ZnF_AN1"/>
    <property type="match status" value="1"/>
</dbReference>
<dbReference type="SUPFAM" id="SSF118310">
    <property type="entry name" value="AN1-like Zinc finger"/>
    <property type="match status" value="1"/>
</dbReference>
<dbReference type="SUPFAM" id="SSF57716">
    <property type="entry name" value="Glucocorticoid receptor-like (DNA-binding domain)"/>
    <property type="match status" value="1"/>
</dbReference>
<dbReference type="PROSITE" id="PS51036">
    <property type="entry name" value="ZF_A20"/>
    <property type="match status" value="1"/>
</dbReference>
<dbReference type="PROSITE" id="PS51039">
    <property type="entry name" value="ZF_AN1"/>
    <property type="match status" value="1"/>
</dbReference>
<name>ZFAN6_MOUSE</name>
<accession>Q9DCH6</accession>
<accession>Q9ER79</accession>
<gene>
    <name type="primary">Zfand6</name>
    <name type="synonym">Awp1</name>
    <name type="synonym">Za20d3</name>
</gene>
<proteinExistence type="evidence at protein level"/>
<organism>
    <name type="scientific">Mus musculus</name>
    <name type="common">Mouse</name>
    <dbReference type="NCBI Taxonomy" id="10090"/>
    <lineage>
        <taxon>Eukaryota</taxon>
        <taxon>Metazoa</taxon>
        <taxon>Chordata</taxon>
        <taxon>Craniata</taxon>
        <taxon>Vertebrata</taxon>
        <taxon>Euteleostomi</taxon>
        <taxon>Mammalia</taxon>
        <taxon>Eutheria</taxon>
        <taxon>Euarchontoglires</taxon>
        <taxon>Glires</taxon>
        <taxon>Rodentia</taxon>
        <taxon>Myomorpha</taxon>
        <taxon>Muroidea</taxon>
        <taxon>Muridae</taxon>
        <taxon>Murinae</taxon>
        <taxon>Mus</taxon>
        <taxon>Mus</taxon>
    </lineage>
</organism>
<reference key="1">
    <citation type="journal article" date="2000" name="Gene">
        <title>Cloning and characterization of AWP1, a novel protein that associates with serine/threonine kinase PRK1 in vivo.</title>
        <authorList>
            <person name="Duan W."/>
            <person name="Sun B."/>
            <person name="Li T.W."/>
            <person name="Tan B.J."/>
            <person name="Lee M.K."/>
            <person name="Teo T.S."/>
        </authorList>
    </citation>
    <scope>NUCLEOTIDE SEQUENCE [MRNA]</scope>
    <scope>INTERACTION WITH PKN1</scope>
    <source>
        <tissue>Liver</tissue>
        <tissue>Mammary gland</tissue>
        <tissue>Uterus</tissue>
    </source>
</reference>
<reference key="2">
    <citation type="journal article" date="2005" name="Science">
        <title>The transcriptional landscape of the mammalian genome.</title>
        <authorList>
            <person name="Carninci P."/>
            <person name="Kasukawa T."/>
            <person name="Katayama S."/>
            <person name="Gough J."/>
            <person name="Frith M.C."/>
            <person name="Maeda N."/>
            <person name="Oyama R."/>
            <person name="Ravasi T."/>
            <person name="Lenhard B."/>
            <person name="Wells C."/>
            <person name="Kodzius R."/>
            <person name="Shimokawa K."/>
            <person name="Bajic V.B."/>
            <person name="Brenner S.E."/>
            <person name="Batalov S."/>
            <person name="Forrest A.R."/>
            <person name="Zavolan M."/>
            <person name="Davis M.J."/>
            <person name="Wilming L.G."/>
            <person name="Aidinis V."/>
            <person name="Allen J.E."/>
            <person name="Ambesi-Impiombato A."/>
            <person name="Apweiler R."/>
            <person name="Aturaliya R.N."/>
            <person name="Bailey T.L."/>
            <person name="Bansal M."/>
            <person name="Baxter L."/>
            <person name="Beisel K.W."/>
            <person name="Bersano T."/>
            <person name="Bono H."/>
            <person name="Chalk A.M."/>
            <person name="Chiu K.P."/>
            <person name="Choudhary V."/>
            <person name="Christoffels A."/>
            <person name="Clutterbuck D.R."/>
            <person name="Crowe M.L."/>
            <person name="Dalla E."/>
            <person name="Dalrymple B.P."/>
            <person name="de Bono B."/>
            <person name="Della Gatta G."/>
            <person name="di Bernardo D."/>
            <person name="Down T."/>
            <person name="Engstrom P."/>
            <person name="Fagiolini M."/>
            <person name="Faulkner G."/>
            <person name="Fletcher C.F."/>
            <person name="Fukushima T."/>
            <person name="Furuno M."/>
            <person name="Futaki S."/>
            <person name="Gariboldi M."/>
            <person name="Georgii-Hemming P."/>
            <person name="Gingeras T.R."/>
            <person name="Gojobori T."/>
            <person name="Green R.E."/>
            <person name="Gustincich S."/>
            <person name="Harbers M."/>
            <person name="Hayashi Y."/>
            <person name="Hensch T.K."/>
            <person name="Hirokawa N."/>
            <person name="Hill D."/>
            <person name="Huminiecki L."/>
            <person name="Iacono M."/>
            <person name="Ikeo K."/>
            <person name="Iwama A."/>
            <person name="Ishikawa T."/>
            <person name="Jakt M."/>
            <person name="Kanapin A."/>
            <person name="Katoh M."/>
            <person name="Kawasawa Y."/>
            <person name="Kelso J."/>
            <person name="Kitamura H."/>
            <person name="Kitano H."/>
            <person name="Kollias G."/>
            <person name="Krishnan S.P."/>
            <person name="Kruger A."/>
            <person name="Kummerfeld S.K."/>
            <person name="Kurochkin I.V."/>
            <person name="Lareau L.F."/>
            <person name="Lazarevic D."/>
            <person name="Lipovich L."/>
            <person name="Liu J."/>
            <person name="Liuni S."/>
            <person name="McWilliam S."/>
            <person name="Madan Babu M."/>
            <person name="Madera M."/>
            <person name="Marchionni L."/>
            <person name="Matsuda H."/>
            <person name="Matsuzawa S."/>
            <person name="Miki H."/>
            <person name="Mignone F."/>
            <person name="Miyake S."/>
            <person name="Morris K."/>
            <person name="Mottagui-Tabar S."/>
            <person name="Mulder N."/>
            <person name="Nakano N."/>
            <person name="Nakauchi H."/>
            <person name="Ng P."/>
            <person name="Nilsson R."/>
            <person name="Nishiguchi S."/>
            <person name="Nishikawa S."/>
            <person name="Nori F."/>
            <person name="Ohara O."/>
            <person name="Okazaki Y."/>
            <person name="Orlando V."/>
            <person name="Pang K.C."/>
            <person name="Pavan W.J."/>
            <person name="Pavesi G."/>
            <person name="Pesole G."/>
            <person name="Petrovsky N."/>
            <person name="Piazza S."/>
            <person name="Reed J."/>
            <person name="Reid J.F."/>
            <person name="Ring B.Z."/>
            <person name="Ringwald M."/>
            <person name="Rost B."/>
            <person name="Ruan Y."/>
            <person name="Salzberg S.L."/>
            <person name="Sandelin A."/>
            <person name="Schneider C."/>
            <person name="Schoenbach C."/>
            <person name="Sekiguchi K."/>
            <person name="Semple C.A."/>
            <person name="Seno S."/>
            <person name="Sessa L."/>
            <person name="Sheng Y."/>
            <person name="Shibata Y."/>
            <person name="Shimada H."/>
            <person name="Shimada K."/>
            <person name="Silva D."/>
            <person name="Sinclair B."/>
            <person name="Sperling S."/>
            <person name="Stupka E."/>
            <person name="Sugiura K."/>
            <person name="Sultana R."/>
            <person name="Takenaka Y."/>
            <person name="Taki K."/>
            <person name="Tammoja K."/>
            <person name="Tan S.L."/>
            <person name="Tang S."/>
            <person name="Taylor M.S."/>
            <person name="Tegner J."/>
            <person name="Teichmann S.A."/>
            <person name="Ueda H.R."/>
            <person name="van Nimwegen E."/>
            <person name="Verardo R."/>
            <person name="Wei C.L."/>
            <person name="Yagi K."/>
            <person name="Yamanishi H."/>
            <person name="Zabarovsky E."/>
            <person name="Zhu S."/>
            <person name="Zimmer A."/>
            <person name="Hide W."/>
            <person name="Bult C."/>
            <person name="Grimmond S.M."/>
            <person name="Teasdale R.D."/>
            <person name="Liu E.T."/>
            <person name="Brusic V."/>
            <person name="Quackenbush J."/>
            <person name="Wahlestedt C."/>
            <person name="Mattick J.S."/>
            <person name="Hume D.A."/>
            <person name="Kai C."/>
            <person name="Sasaki D."/>
            <person name="Tomaru Y."/>
            <person name="Fukuda S."/>
            <person name="Kanamori-Katayama M."/>
            <person name="Suzuki M."/>
            <person name="Aoki J."/>
            <person name="Arakawa T."/>
            <person name="Iida J."/>
            <person name="Imamura K."/>
            <person name="Itoh M."/>
            <person name="Kato T."/>
            <person name="Kawaji H."/>
            <person name="Kawagashira N."/>
            <person name="Kawashima T."/>
            <person name="Kojima M."/>
            <person name="Kondo S."/>
            <person name="Konno H."/>
            <person name="Nakano K."/>
            <person name="Ninomiya N."/>
            <person name="Nishio T."/>
            <person name="Okada M."/>
            <person name="Plessy C."/>
            <person name="Shibata K."/>
            <person name="Shiraki T."/>
            <person name="Suzuki S."/>
            <person name="Tagami M."/>
            <person name="Waki K."/>
            <person name="Watahiki A."/>
            <person name="Okamura-Oho Y."/>
            <person name="Suzuki H."/>
            <person name="Kawai J."/>
            <person name="Hayashizaki Y."/>
        </authorList>
    </citation>
    <scope>NUCLEOTIDE SEQUENCE [LARGE SCALE MRNA]</scope>
    <source>
        <strain>C57BL/6J</strain>
        <tissue>Kidney</tissue>
        <tissue>Lung</tissue>
    </source>
</reference>
<reference key="3">
    <citation type="journal article" date="2004" name="Genome Res.">
        <title>The status, quality, and expansion of the NIH full-length cDNA project: the Mammalian Gene Collection (MGC).</title>
        <authorList>
            <consortium name="The MGC Project Team"/>
        </authorList>
    </citation>
    <scope>NUCLEOTIDE SEQUENCE [LARGE SCALE MRNA]</scope>
    <source>
        <strain>FVB/N</strain>
        <tissue>Mammary tumor</tissue>
    </source>
</reference>
<reference key="4">
    <citation type="journal article" date="2012" name="Traffic">
        <title>AWP1/ZFAND6 functions in Pex5 export by interacting with cys-monoubiquitinated Pex5 and Pex6 AAA ATPase.</title>
        <authorList>
            <person name="Miyata N."/>
            <person name="Okumoto K."/>
            <person name="Mukai S."/>
            <person name="Noguchi M."/>
            <person name="Fujiki Y."/>
        </authorList>
    </citation>
    <scope>FUNCTION</scope>
    <scope>UBIQUITIN-BINDING</scope>
    <scope>INTERACTION WITH PEX6 AND PEX5</scope>
    <scope>MUTAGENESIS OF CYS-30 AND CYS-180</scope>
</reference>
<reference key="5">
    <citation type="journal article" date="2013" name="Mol. Cell">
        <title>SIRT5-mediated lysine desuccinylation impacts diverse metabolic pathways.</title>
        <authorList>
            <person name="Park J."/>
            <person name="Chen Y."/>
            <person name="Tishkoff D.X."/>
            <person name="Peng C."/>
            <person name="Tan M."/>
            <person name="Dai L."/>
            <person name="Xie Z."/>
            <person name="Zhang Y."/>
            <person name="Zwaans B.M."/>
            <person name="Skinner M.E."/>
            <person name="Lombard D.B."/>
            <person name="Zhao Y."/>
        </authorList>
    </citation>
    <scope>ACETYLATION [LARGE SCALE ANALYSIS] AT LYS-219</scope>
    <scope>IDENTIFICATION BY MASS SPECTROMETRY [LARGE SCALE ANALYSIS]</scope>
    <source>
        <tissue>Embryonic fibroblast</tissue>
    </source>
</reference>
<protein>
    <recommendedName>
        <fullName>AN1-type zinc finger protein 6</fullName>
    </recommendedName>
    <alternativeName>
        <fullName>Associated with PRK1 protein</fullName>
    </alternativeName>
    <alternativeName>
        <fullName>Zinc finger A20 domain-containing protein 3</fullName>
    </alternativeName>
</protein>
<evidence type="ECO:0000250" key="1"/>
<evidence type="ECO:0000250" key="2">
    <source>
        <dbReference type="UniProtKB" id="Q6FIF0"/>
    </source>
</evidence>
<evidence type="ECO:0000255" key="3">
    <source>
        <dbReference type="PROSITE-ProRule" id="PRU00449"/>
    </source>
</evidence>
<evidence type="ECO:0000255" key="4">
    <source>
        <dbReference type="PROSITE-ProRule" id="PRU00451"/>
    </source>
</evidence>
<evidence type="ECO:0000256" key="5">
    <source>
        <dbReference type="SAM" id="MobiDB-lite"/>
    </source>
</evidence>
<evidence type="ECO:0000269" key="6">
    <source>
    </source>
</evidence>
<evidence type="ECO:0000269" key="7">
    <source>
    </source>
</evidence>
<evidence type="ECO:0000305" key="8"/>
<evidence type="ECO:0007744" key="9">
    <source>
    </source>
</evidence>
<comment type="function">
    <text evidence="1 7">Involved in regulation of TNF-alpha induced NF-kappa-B activation and apoptosis. Involved in modulation of 'Lys-48'-linked polyubiquitination status of TRAF2 and decreases association of TRAF2 with RIPK1 (By similarity). Required for PTS1 target sequence-dependent protein import into peroxisomes and PEX5 stability; may cooperate with PEX6. In vitro involved in PEX5 export from the cytosol to peroxisomes.</text>
</comment>
<comment type="subunit">
    <text evidence="1 6 7">Interacts with PKN1. Interacts with TRAF2 (By similarity). Interacts with mono- and polyubiquitin. Interacts with PEX6. Interacts with PEX5 (Cys-linked ubiquitinated).</text>
</comment>
<comment type="subcellular location">
    <subcellularLocation>
        <location evidence="1">Cytoplasm</location>
    </subcellularLocation>
</comment>
<comment type="domain">
    <text evidence="1">The A20-type zinc finger domain mediates regulation of NF-kappa-B activity.</text>
</comment>
<comment type="domain">
    <text evidence="1">The AN1-type zinc finger domain mediates association with TRAF2.</text>
</comment>
<sequence>MAQETNHSQAPMLCSTGCGFYGNPRTNGMCSVCYKEHLQRQNSSNGRISPPAASVSSLSESLPVQCADGSVPDAQSALDSTSSSMQPGPVSNQSLLSESVAPSQVDSTSVDKAVSETEDLQGPRAEGLVPLECDPPSSVSDTTQQPSEEQSKSLEKPKQKKNRCFMCRKKVGLTGFECRCGNVYCGVHRYSDVHNCSYNYKADAAEKIRKENPVVVGEKIQKI</sequence>
<keyword id="KW-0007">Acetylation</keyword>
<keyword id="KW-0053">Apoptosis</keyword>
<keyword id="KW-0963">Cytoplasm</keyword>
<keyword id="KW-0479">Metal-binding</keyword>
<keyword id="KW-0597">Phosphoprotein</keyword>
<keyword id="KW-0653">Protein transport</keyword>
<keyword id="KW-1185">Reference proteome</keyword>
<keyword id="KW-0813">Transport</keyword>
<keyword id="KW-0862">Zinc</keyword>
<keyword id="KW-0863">Zinc-finger</keyword>